<comment type="subcellular location">
    <subcellularLocation>
        <location evidence="4">Secreted</location>
    </subcellularLocation>
</comment>
<comment type="similarity">
    <text evidence="4">Belongs to the CRISP family.</text>
</comment>
<keyword id="KW-1015">Disulfide bond</keyword>
<keyword id="KW-1185">Reference proteome</keyword>
<keyword id="KW-0677">Repeat</keyword>
<keyword id="KW-0964">Secreted</keyword>
<keyword id="KW-0732">Signal</keyword>
<protein>
    <recommendedName>
        <fullName>Cysteine-rich secretory protein LCCL domain-containing 1</fullName>
    </recommendedName>
    <alternativeName>
        <fullName>CocoaCrisp</fullName>
    </alternativeName>
</protein>
<accession>Q98ST5</accession>
<feature type="signal peptide" evidence="1">
    <location>
        <begin position="1"/>
        <end position="23"/>
    </location>
</feature>
<feature type="chain" id="PRO_0000248148" description="Cysteine-rich secretory protein LCCL domain-containing 1">
    <location>
        <begin position="24"/>
        <end position="523"/>
    </location>
</feature>
<feature type="domain" description="SCP">
    <location>
        <begin position="66"/>
        <end position="206"/>
    </location>
</feature>
<feature type="domain" description="LCCL 1" evidence="2">
    <location>
        <begin position="302"/>
        <end position="397"/>
    </location>
</feature>
<feature type="domain" description="LCCL 2" evidence="2">
    <location>
        <begin position="403"/>
        <end position="505"/>
    </location>
</feature>
<feature type="region of interest" description="Disordered" evidence="3">
    <location>
        <begin position="246"/>
        <end position="298"/>
    </location>
</feature>
<feature type="compositionally biased region" description="Polar residues" evidence="3">
    <location>
        <begin position="269"/>
        <end position="288"/>
    </location>
</feature>
<feature type="disulfide bond" evidence="2">
    <location>
        <begin position="308"/>
        <end position="326"/>
    </location>
</feature>
<feature type="disulfide bond" evidence="2">
    <location>
        <begin position="330"/>
        <end position="350"/>
    </location>
</feature>
<feature type="disulfide bond" evidence="2">
    <location>
        <begin position="409"/>
        <end position="431"/>
    </location>
</feature>
<feature type="disulfide bond" evidence="2">
    <location>
        <begin position="435"/>
        <end position="458"/>
    </location>
</feature>
<proteinExistence type="evidence at transcript level"/>
<evidence type="ECO:0000255" key="1"/>
<evidence type="ECO:0000255" key="2">
    <source>
        <dbReference type="PROSITE-ProRule" id="PRU00123"/>
    </source>
</evidence>
<evidence type="ECO:0000256" key="3">
    <source>
        <dbReference type="SAM" id="MobiDB-lite"/>
    </source>
</evidence>
<evidence type="ECO:0000305" key="4"/>
<dbReference type="EMBL" id="AF329199">
    <property type="protein sequence ID" value="AAK16497.1"/>
    <property type="molecule type" value="mRNA"/>
</dbReference>
<dbReference type="SMR" id="Q98ST5"/>
<dbReference type="FunCoup" id="Q98ST5">
    <property type="interactions" value="85"/>
</dbReference>
<dbReference type="STRING" id="9031.ENSGALP00000049718"/>
<dbReference type="PaxDb" id="9031-ENSGALP00000035874"/>
<dbReference type="VEuPathDB" id="HostDB:geneid_395369"/>
<dbReference type="eggNOG" id="KOG3017">
    <property type="taxonomic scope" value="Eukaryota"/>
</dbReference>
<dbReference type="InParanoid" id="Q98ST5"/>
<dbReference type="OrthoDB" id="414826at2759"/>
<dbReference type="PhylomeDB" id="Q98ST5"/>
<dbReference type="Proteomes" id="UP000000539">
    <property type="component" value="Unassembled WGS sequence"/>
</dbReference>
<dbReference type="GO" id="GO:0005615">
    <property type="term" value="C:extracellular space"/>
    <property type="evidence" value="ECO:0000318"/>
    <property type="project" value="GO_Central"/>
</dbReference>
<dbReference type="CDD" id="cd18813">
    <property type="entry name" value="CAP_CRISPLD1"/>
    <property type="match status" value="1"/>
</dbReference>
<dbReference type="FunFam" id="3.40.33.10:FF:000001">
    <property type="entry name" value="Cysteine-rich secretory protein LCCL domain containing 1"/>
    <property type="match status" value="1"/>
</dbReference>
<dbReference type="FunFam" id="2.170.130.20:FF:000001">
    <property type="entry name" value="Cysteine-rich secretory protein LCCL domain-containing 1"/>
    <property type="match status" value="2"/>
</dbReference>
<dbReference type="Gene3D" id="3.40.33.10">
    <property type="entry name" value="CAP"/>
    <property type="match status" value="1"/>
</dbReference>
<dbReference type="Gene3D" id="2.170.130.20">
    <property type="entry name" value="LCCL-like domain"/>
    <property type="match status" value="2"/>
</dbReference>
<dbReference type="InterPro" id="IPR018244">
    <property type="entry name" value="Allrgn_V5/Tpx1_CS"/>
</dbReference>
<dbReference type="InterPro" id="IPR014044">
    <property type="entry name" value="CAP_dom"/>
</dbReference>
<dbReference type="InterPro" id="IPR035940">
    <property type="entry name" value="CAP_sf"/>
</dbReference>
<dbReference type="InterPro" id="IPR051957">
    <property type="entry name" value="CRISP-LCCL_domain"/>
</dbReference>
<dbReference type="InterPro" id="IPR001283">
    <property type="entry name" value="CRISP-related"/>
</dbReference>
<dbReference type="InterPro" id="IPR004043">
    <property type="entry name" value="LCCL"/>
</dbReference>
<dbReference type="InterPro" id="IPR036609">
    <property type="entry name" value="LCCL_sf"/>
</dbReference>
<dbReference type="PANTHER" id="PTHR31331:SF1">
    <property type="entry name" value="CYSTEINE RICH SECRETORY PROTEIN LCCL DOMAIN CONTAINING 2"/>
    <property type="match status" value="1"/>
</dbReference>
<dbReference type="PANTHER" id="PTHR31331">
    <property type="entry name" value="LCCL DOMAIN PROTEIN (AFU_ORTHOLOGUE AFUA_5G08630)"/>
    <property type="match status" value="1"/>
</dbReference>
<dbReference type="Pfam" id="PF00188">
    <property type="entry name" value="CAP"/>
    <property type="match status" value="1"/>
</dbReference>
<dbReference type="Pfam" id="PF03815">
    <property type="entry name" value="LCCL"/>
    <property type="match status" value="2"/>
</dbReference>
<dbReference type="PRINTS" id="PR00837">
    <property type="entry name" value="V5TPXLIKE"/>
</dbReference>
<dbReference type="SMART" id="SM00603">
    <property type="entry name" value="LCCL"/>
    <property type="match status" value="2"/>
</dbReference>
<dbReference type="SMART" id="SM00198">
    <property type="entry name" value="SCP"/>
    <property type="match status" value="1"/>
</dbReference>
<dbReference type="SUPFAM" id="SSF69848">
    <property type="entry name" value="LCCL domain"/>
    <property type="match status" value="2"/>
</dbReference>
<dbReference type="SUPFAM" id="SSF55797">
    <property type="entry name" value="PR-1-like"/>
    <property type="match status" value="1"/>
</dbReference>
<dbReference type="PROSITE" id="PS01010">
    <property type="entry name" value="CRISP_2"/>
    <property type="match status" value="1"/>
</dbReference>
<dbReference type="PROSITE" id="PS50820">
    <property type="entry name" value="LCCL"/>
    <property type="match status" value="2"/>
</dbReference>
<name>CRLD1_CHICK</name>
<reference key="1">
    <citation type="submission" date="2000-12" db="EMBL/GenBank/DDBJ databases">
        <title>A novel cysteine-rich secreted protein (CRISP) family member, CocoaCrisp, provides insight into the process of septation in the developing chicken midbrain.</title>
        <authorList>
            <person name="Smith D.M."/>
            <person name="Collins-Racie L.A."/>
            <person name="Lavallie E.R."/>
            <person name="Gamer L."/>
            <person name="Roberts D.J."/>
            <person name="Marigo V.A."/>
            <person name="Copeland N.G."/>
            <person name="Jenkins N.A."/>
            <person name="McCoy J."/>
            <person name="Tabin C.J."/>
        </authorList>
    </citation>
    <scope>NUCLEOTIDE SEQUENCE [MRNA]</scope>
</reference>
<organism>
    <name type="scientific">Gallus gallus</name>
    <name type="common">Chicken</name>
    <dbReference type="NCBI Taxonomy" id="9031"/>
    <lineage>
        <taxon>Eukaryota</taxon>
        <taxon>Metazoa</taxon>
        <taxon>Chordata</taxon>
        <taxon>Craniata</taxon>
        <taxon>Vertebrata</taxon>
        <taxon>Euteleostomi</taxon>
        <taxon>Archelosauria</taxon>
        <taxon>Archosauria</taxon>
        <taxon>Dinosauria</taxon>
        <taxon>Saurischia</taxon>
        <taxon>Theropoda</taxon>
        <taxon>Coelurosauria</taxon>
        <taxon>Aves</taxon>
        <taxon>Neognathae</taxon>
        <taxon>Galloanserae</taxon>
        <taxon>Galliformes</taxon>
        <taxon>Phasianidae</taxon>
        <taxon>Phasianinae</taxon>
        <taxon>Gallus</taxon>
    </lineage>
</organism>
<sequence length="523" mass="59050">MKYVVQEWLRITTLLFIAQAVSAMVLPNATLLEELLEKYMDEDGEWWIANVSRKRAITDSDMQSILDLHNKLRGQVYPPASNMEYMTWDTELERSAESWAETCLWEHGPASLLPSIGQNLGAHWGRYRPPTFHVQAWYDEVRDFTYPHPHECNPYCPYKCSGPVCTHYTQVVWATSSRIGCAINLCHNMNIWGQIWPKAVYLVCNYSPKGNWWGHAPYKPGRPCSACPPSFGGGCRENLCYREGSERPYSPHEPEEETNEIERQRSKAQDATAQSRPRTHSPSGSTGSEDSEKNEVISTQQMSQIVSCEVRLRDQCKGTTCNRYECPAGCLDSKAKVIGSVHYEMQSSICKAAIHYGILDNEGGWVDVTRQGRKNYFIKSYRNGIQSIGKYQSANSFTVSKVTVQAITCETTVEQLCPFQKPASHCPRVYCPHNCMQANPHYARVIGTRIYSDISSICRAAVHAGVVRNEGGYVDVMPVDKRKVYIASFLNGIFSESLQNPPGKQGIQSICCRLNQVDYKTGK</sequence>
<gene>
    <name type="primary">CRISPLD1</name>
</gene>